<feature type="chain" id="PRO_0000111781" description="Inner membrane protein YgaZ">
    <location>
        <begin position="1"/>
        <end position="245"/>
    </location>
</feature>
<feature type="topological domain" description="Cytoplasmic" evidence="1">
    <location>
        <begin position="1"/>
        <end position="24"/>
    </location>
</feature>
<feature type="transmembrane region" description="Helical" evidence="1">
    <location>
        <begin position="25"/>
        <end position="45"/>
    </location>
</feature>
<feature type="topological domain" description="Periplasmic" evidence="1">
    <location>
        <begin position="46"/>
        <end position="63"/>
    </location>
</feature>
<feature type="transmembrane region" description="Helical" evidence="1">
    <location>
        <begin position="64"/>
        <end position="84"/>
    </location>
</feature>
<feature type="topological domain" description="Cytoplasmic" evidence="1">
    <location>
        <begin position="85"/>
        <end position="109"/>
    </location>
</feature>
<feature type="transmembrane region" description="Helical" evidence="1">
    <location>
        <begin position="110"/>
        <end position="130"/>
    </location>
</feature>
<feature type="topological domain" description="Periplasmic" evidence="1">
    <location>
        <begin position="131"/>
        <end position="140"/>
    </location>
</feature>
<feature type="transmembrane region" description="Helical" evidence="1">
    <location>
        <begin position="141"/>
        <end position="161"/>
    </location>
</feature>
<feature type="topological domain" description="Cytoplasmic" evidence="1">
    <location>
        <begin position="162"/>
        <end position="172"/>
    </location>
</feature>
<feature type="transmembrane region" description="Helical" evidence="1">
    <location>
        <begin position="173"/>
        <end position="193"/>
    </location>
</feature>
<feature type="topological domain" description="Periplasmic" evidence="1">
    <location>
        <begin position="194"/>
        <end position="205"/>
    </location>
</feature>
<feature type="transmembrane region" description="Helical" evidence="1">
    <location>
        <begin position="206"/>
        <end position="226"/>
    </location>
</feature>
<feature type="topological domain" description="Cytoplasmic" evidence="1">
    <location>
        <begin position="227"/>
        <end position="245"/>
    </location>
</feature>
<sequence>MESPTPQPAPGSATFMEGCKDSLPIVISYIPVAFAFGLNATRLGFSPLESVFFSCIIYAGASQFVITAMLAAGSSLWIAALTVMAMDVRHVLYGPSLRSRIIQRLQKSKTALWAFGLTDEVFAAATAKLVRNNRRWSENWMIGIAFSSWSSWVFGTVIGAFSGSGLLQGYPAVEAALGFMLPALFMSFLLASFQRKQSLCVTAALVGALAGVTLFSIPVAILAGIVCGCLTALIQAFWQGAPDEL</sequence>
<evidence type="ECO:0000255" key="1"/>
<evidence type="ECO:0000305" key="2"/>
<accession>P76630</accession>
<accession>Q2MAC2</accession>
<reference key="1">
    <citation type="journal article" date="1997" name="Science">
        <title>The complete genome sequence of Escherichia coli K-12.</title>
        <authorList>
            <person name="Blattner F.R."/>
            <person name="Plunkett G. III"/>
            <person name="Bloch C.A."/>
            <person name="Perna N.T."/>
            <person name="Burland V."/>
            <person name="Riley M."/>
            <person name="Collado-Vides J."/>
            <person name="Glasner J.D."/>
            <person name="Rode C.K."/>
            <person name="Mayhew G.F."/>
            <person name="Gregor J."/>
            <person name="Davis N.W."/>
            <person name="Kirkpatrick H.A."/>
            <person name="Goeden M.A."/>
            <person name="Rose D.J."/>
            <person name="Mau B."/>
            <person name="Shao Y."/>
        </authorList>
    </citation>
    <scope>NUCLEOTIDE SEQUENCE [LARGE SCALE GENOMIC DNA]</scope>
    <source>
        <strain>K12 / MG1655 / ATCC 47076</strain>
    </source>
</reference>
<reference key="2">
    <citation type="journal article" date="2006" name="Mol. Syst. Biol.">
        <title>Highly accurate genome sequences of Escherichia coli K-12 strains MG1655 and W3110.</title>
        <authorList>
            <person name="Hayashi K."/>
            <person name="Morooka N."/>
            <person name="Yamamoto Y."/>
            <person name="Fujita K."/>
            <person name="Isono K."/>
            <person name="Choi S."/>
            <person name="Ohtsubo E."/>
            <person name="Baba T."/>
            <person name="Wanner B.L."/>
            <person name="Mori H."/>
            <person name="Horiuchi T."/>
        </authorList>
    </citation>
    <scope>NUCLEOTIDE SEQUENCE [LARGE SCALE GENOMIC DNA]</scope>
    <source>
        <strain>K12 / W3110 / ATCC 27325 / DSM 5911</strain>
    </source>
</reference>
<reference key="3">
    <citation type="journal article" date="2005" name="Science">
        <title>Global topology analysis of the Escherichia coli inner membrane proteome.</title>
        <authorList>
            <person name="Daley D.O."/>
            <person name="Rapp M."/>
            <person name="Granseth E."/>
            <person name="Melen K."/>
            <person name="Drew D."/>
            <person name="von Heijne G."/>
        </authorList>
    </citation>
    <scope>TOPOLOGY [LARGE SCALE ANALYSIS]</scope>
    <source>
        <strain>K12 / MG1655 / ATCC 47076</strain>
    </source>
</reference>
<protein>
    <recommendedName>
        <fullName>Inner membrane protein YgaZ</fullName>
    </recommendedName>
</protein>
<proteinExistence type="evidence at protein level"/>
<dbReference type="EMBL" id="U00096">
    <property type="protein sequence ID" value="AAC75729.1"/>
    <property type="molecule type" value="Genomic_DNA"/>
</dbReference>
<dbReference type="EMBL" id="AP009048">
    <property type="protein sequence ID" value="BAE76784.1"/>
    <property type="molecule type" value="Genomic_DNA"/>
</dbReference>
<dbReference type="PIR" id="C65048">
    <property type="entry name" value="C65048"/>
</dbReference>
<dbReference type="RefSeq" id="NP_417167.1">
    <property type="nucleotide sequence ID" value="NC_000913.3"/>
</dbReference>
<dbReference type="RefSeq" id="WP_000445651.1">
    <property type="nucleotide sequence ID" value="NZ_LN832404.1"/>
</dbReference>
<dbReference type="BioGRID" id="4262948">
    <property type="interactions" value="16"/>
</dbReference>
<dbReference type="ComplexPortal" id="CPX-5888">
    <property type="entry name" value="ygaZH putative valine exporter complex"/>
</dbReference>
<dbReference type="FunCoup" id="P76630">
    <property type="interactions" value="226"/>
</dbReference>
<dbReference type="STRING" id="511145.b2682"/>
<dbReference type="TCDB" id="2.A.78.1.3">
    <property type="family name" value="the branched chain amino acid exporter (liv-e) family"/>
</dbReference>
<dbReference type="PaxDb" id="511145-b2682"/>
<dbReference type="EnsemblBacteria" id="AAC75729">
    <property type="protein sequence ID" value="AAC75729"/>
    <property type="gene ID" value="b2682"/>
</dbReference>
<dbReference type="GeneID" id="945093"/>
<dbReference type="KEGG" id="ecj:JW2657"/>
<dbReference type="KEGG" id="eco:b2682"/>
<dbReference type="KEGG" id="ecoc:C3026_14770"/>
<dbReference type="PATRIC" id="fig|1411691.4.peg.4058"/>
<dbReference type="EchoBASE" id="EB3299"/>
<dbReference type="eggNOG" id="COG1296">
    <property type="taxonomic scope" value="Bacteria"/>
</dbReference>
<dbReference type="HOGENOM" id="CLU_065777_3_1_6"/>
<dbReference type="InParanoid" id="P76630"/>
<dbReference type="OMA" id="MADENWA"/>
<dbReference type="OrthoDB" id="6711132at2"/>
<dbReference type="PhylomeDB" id="P76630"/>
<dbReference type="BioCyc" id="EcoCyc:G7405-MONOMER"/>
<dbReference type="BioCyc" id="MetaCyc:G7405-MONOMER"/>
<dbReference type="PRO" id="PR:P76630"/>
<dbReference type="Proteomes" id="UP000000625">
    <property type="component" value="Chromosome"/>
</dbReference>
<dbReference type="GO" id="GO:0005886">
    <property type="term" value="C:plasma membrane"/>
    <property type="evidence" value="ECO:0000255"/>
    <property type="project" value="EcoCyc"/>
</dbReference>
<dbReference type="GO" id="GO:1902495">
    <property type="term" value="C:transmembrane transporter complex"/>
    <property type="evidence" value="ECO:0000303"/>
    <property type="project" value="ComplexPortal"/>
</dbReference>
<dbReference type="GO" id="GO:1903785">
    <property type="term" value="P:L-valine transmembrane transport"/>
    <property type="evidence" value="ECO:0000314"/>
    <property type="project" value="EcoCyc"/>
</dbReference>
<dbReference type="InterPro" id="IPR011606">
    <property type="entry name" value="Brnchd-chn_aa_trnsp_permease"/>
</dbReference>
<dbReference type="PANTHER" id="PTHR34979">
    <property type="entry name" value="INNER MEMBRANE PROTEIN YGAZ"/>
    <property type="match status" value="1"/>
</dbReference>
<dbReference type="PANTHER" id="PTHR34979:SF1">
    <property type="entry name" value="INNER MEMBRANE PROTEIN YGAZ"/>
    <property type="match status" value="1"/>
</dbReference>
<dbReference type="Pfam" id="PF03591">
    <property type="entry name" value="AzlC"/>
    <property type="match status" value="1"/>
</dbReference>
<name>YGAZ_ECOLI</name>
<organism>
    <name type="scientific">Escherichia coli (strain K12)</name>
    <dbReference type="NCBI Taxonomy" id="83333"/>
    <lineage>
        <taxon>Bacteria</taxon>
        <taxon>Pseudomonadati</taxon>
        <taxon>Pseudomonadota</taxon>
        <taxon>Gammaproteobacteria</taxon>
        <taxon>Enterobacterales</taxon>
        <taxon>Enterobacteriaceae</taxon>
        <taxon>Escherichia</taxon>
    </lineage>
</organism>
<keyword id="KW-0997">Cell inner membrane</keyword>
<keyword id="KW-1003">Cell membrane</keyword>
<keyword id="KW-0472">Membrane</keyword>
<keyword id="KW-1185">Reference proteome</keyword>
<keyword id="KW-0812">Transmembrane</keyword>
<keyword id="KW-1133">Transmembrane helix</keyword>
<keyword id="KW-0813">Transport</keyword>
<gene>
    <name type="primary">ygaZ</name>
    <name type="ordered locus">b2682</name>
    <name type="ordered locus">JW2657</name>
</gene>
<comment type="subcellular location">
    <subcellularLocation>
        <location>Cell inner membrane</location>
        <topology>Multi-pass membrane protein</topology>
    </subcellularLocation>
</comment>
<comment type="similarity">
    <text evidence="2">Belongs to the AzlC family.</text>
</comment>